<keyword id="KW-0488">Methylation</keyword>
<keyword id="KW-1185">Reference proteome</keyword>
<keyword id="KW-0687">Ribonucleoprotein</keyword>
<keyword id="KW-0689">Ribosomal protein</keyword>
<keyword id="KW-0694">RNA-binding</keyword>
<keyword id="KW-0699">rRNA-binding</keyword>
<gene>
    <name evidence="1" type="primary">rplK</name>
    <name type="ordered locus">MSC_0994</name>
</gene>
<reference key="1">
    <citation type="journal article" date="2004" name="Genome Res.">
        <title>The genome sequence of Mycoplasma mycoides subsp. mycoides SC type strain PG1T, the causative agent of contagious bovine pleuropneumonia (CBPP).</title>
        <authorList>
            <person name="Westberg J."/>
            <person name="Persson A."/>
            <person name="Holmberg A."/>
            <person name="Goesmann A."/>
            <person name="Lundeberg J."/>
            <person name="Johansson K.-E."/>
            <person name="Pettersson B."/>
            <person name="Uhlen M."/>
        </authorList>
    </citation>
    <scope>NUCLEOTIDE SEQUENCE [LARGE SCALE GENOMIC DNA]</scope>
    <source>
        <strain>CCUG 32753 / NCTC 10114 / PG1</strain>
    </source>
</reference>
<proteinExistence type="inferred from homology"/>
<dbReference type="EMBL" id="BX293980">
    <property type="protein sequence ID" value="CAE77603.1"/>
    <property type="molecule type" value="Genomic_DNA"/>
</dbReference>
<dbReference type="RefSeq" id="NP_975961.1">
    <property type="nucleotide sequence ID" value="NC_005364.2"/>
</dbReference>
<dbReference type="RefSeq" id="WP_011167140.1">
    <property type="nucleotide sequence ID" value="NC_005364.2"/>
</dbReference>
<dbReference type="SMR" id="P62437"/>
<dbReference type="STRING" id="272632.MSC_0994"/>
<dbReference type="GeneID" id="93426009"/>
<dbReference type="KEGG" id="mmy:MSC_0994"/>
<dbReference type="PATRIC" id="fig|272632.4.peg.1079"/>
<dbReference type="eggNOG" id="COG0080">
    <property type="taxonomic scope" value="Bacteria"/>
</dbReference>
<dbReference type="HOGENOM" id="CLU_074237_2_2_14"/>
<dbReference type="Proteomes" id="UP000001016">
    <property type="component" value="Chromosome"/>
</dbReference>
<dbReference type="GO" id="GO:0022625">
    <property type="term" value="C:cytosolic large ribosomal subunit"/>
    <property type="evidence" value="ECO:0007669"/>
    <property type="project" value="TreeGrafter"/>
</dbReference>
<dbReference type="GO" id="GO:0070180">
    <property type="term" value="F:large ribosomal subunit rRNA binding"/>
    <property type="evidence" value="ECO:0007669"/>
    <property type="project" value="UniProtKB-UniRule"/>
</dbReference>
<dbReference type="GO" id="GO:0003735">
    <property type="term" value="F:structural constituent of ribosome"/>
    <property type="evidence" value="ECO:0007669"/>
    <property type="project" value="InterPro"/>
</dbReference>
<dbReference type="GO" id="GO:0006412">
    <property type="term" value="P:translation"/>
    <property type="evidence" value="ECO:0007669"/>
    <property type="project" value="UniProtKB-UniRule"/>
</dbReference>
<dbReference type="CDD" id="cd00349">
    <property type="entry name" value="Ribosomal_L11"/>
    <property type="match status" value="1"/>
</dbReference>
<dbReference type="Gene3D" id="1.10.10.250">
    <property type="entry name" value="Ribosomal protein L11, C-terminal domain"/>
    <property type="match status" value="1"/>
</dbReference>
<dbReference type="Gene3D" id="3.30.1550.10">
    <property type="entry name" value="Ribosomal protein L11/L12, N-terminal domain"/>
    <property type="match status" value="1"/>
</dbReference>
<dbReference type="HAMAP" id="MF_00736">
    <property type="entry name" value="Ribosomal_uL11"/>
    <property type="match status" value="1"/>
</dbReference>
<dbReference type="InterPro" id="IPR000911">
    <property type="entry name" value="Ribosomal_uL11"/>
</dbReference>
<dbReference type="InterPro" id="IPR006519">
    <property type="entry name" value="Ribosomal_uL11_bac-typ"/>
</dbReference>
<dbReference type="InterPro" id="IPR020783">
    <property type="entry name" value="Ribosomal_uL11_C"/>
</dbReference>
<dbReference type="InterPro" id="IPR036769">
    <property type="entry name" value="Ribosomal_uL11_C_sf"/>
</dbReference>
<dbReference type="InterPro" id="IPR020785">
    <property type="entry name" value="Ribosomal_uL11_CS"/>
</dbReference>
<dbReference type="InterPro" id="IPR020784">
    <property type="entry name" value="Ribosomal_uL11_N"/>
</dbReference>
<dbReference type="InterPro" id="IPR036796">
    <property type="entry name" value="Ribosomal_uL11_N_sf"/>
</dbReference>
<dbReference type="NCBIfam" id="TIGR01632">
    <property type="entry name" value="L11_bact"/>
    <property type="match status" value="1"/>
</dbReference>
<dbReference type="PANTHER" id="PTHR11661">
    <property type="entry name" value="60S RIBOSOMAL PROTEIN L12"/>
    <property type="match status" value="1"/>
</dbReference>
<dbReference type="PANTHER" id="PTHR11661:SF1">
    <property type="entry name" value="LARGE RIBOSOMAL SUBUNIT PROTEIN UL11M"/>
    <property type="match status" value="1"/>
</dbReference>
<dbReference type="Pfam" id="PF00298">
    <property type="entry name" value="Ribosomal_L11"/>
    <property type="match status" value="1"/>
</dbReference>
<dbReference type="Pfam" id="PF03946">
    <property type="entry name" value="Ribosomal_L11_N"/>
    <property type="match status" value="1"/>
</dbReference>
<dbReference type="SMART" id="SM00649">
    <property type="entry name" value="RL11"/>
    <property type="match status" value="1"/>
</dbReference>
<dbReference type="SUPFAM" id="SSF54747">
    <property type="entry name" value="Ribosomal L11/L12e N-terminal domain"/>
    <property type="match status" value="1"/>
</dbReference>
<dbReference type="SUPFAM" id="SSF46906">
    <property type="entry name" value="Ribosomal protein L11, C-terminal domain"/>
    <property type="match status" value="1"/>
</dbReference>
<dbReference type="PROSITE" id="PS00359">
    <property type="entry name" value="RIBOSOMAL_L11"/>
    <property type="match status" value="1"/>
</dbReference>
<name>RL11_MYCMS</name>
<accession>P62437</accession>
<organism>
    <name type="scientific">Mycoplasma mycoides subsp. mycoides SC (strain CCUG 32753 / NCTC 10114 / PG1)</name>
    <dbReference type="NCBI Taxonomy" id="272632"/>
    <lineage>
        <taxon>Bacteria</taxon>
        <taxon>Bacillati</taxon>
        <taxon>Mycoplasmatota</taxon>
        <taxon>Mollicutes</taxon>
        <taxon>Mycoplasmataceae</taxon>
        <taxon>Mycoplasma</taxon>
    </lineage>
</organism>
<protein>
    <recommendedName>
        <fullName evidence="1">Large ribosomal subunit protein uL11</fullName>
    </recommendedName>
    <alternativeName>
        <fullName evidence="2">50S ribosomal protein L11</fullName>
    </alternativeName>
</protein>
<comment type="function">
    <text evidence="1">Forms part of the ribosomal stalk which helps the ribosome interact with GTP-bound translation factors.</text>
</comment>
<comment type="subunit">
    <text evidence="1">Part of the ribosomal stalk of the 50S ribosomal subunit. Interacts with L10 and the large rRNA to form the base of the stalk. L10 forms an elongated spine to which L12 dimers bind in a sequential fashion forming a multimeric L10(L12)X complex.</text>
</comment>
<comment type="PTM">
    <text evidence="1">One or more lysine residues are methylated.</text>
</comment>
<comment type="similarity">
    <text evidence="1">Belongs to the universal ribosomal protein uL11 family.</text>
</comment>
<sequence>MAKKITRVAKLEFMAMQAKPGAELASLGINMPAFTREFNDATKDRAGDVVPVVITAYDDKSFDFVLKTTPTAYMLKKVAKIEKGASNSRTQTVATVTLDDIRSIAEYKMPDLNANTIEAAMKQVIGTAKNMGIKVTGMEDFK</sequence>
<feature type="chain" id="PRO_0000104320" description="Large ribosomal subunit protein uL11">
    <location>
        <begin position="1"/>
        <end position="142"/>
    </location>
</feature>
<evidence type="ECO:0000255" key="1">
    <source>
        <dbReference type="HAMAP-Rule" id="MF_00736"/>
    </source>
</evidence>
<evidence type="ECO:0000305" key="2"/>